<sequence length="170" mass="19422">MITYDDEVVCAPRAGTLYDVLELILDRGMVIDVFVRVSLVGIEILKVDARIVVASVDTYLRFAEACNRLDLEHDVRSKTVPEMFGSPMAKTVGRAGARRTARSLTDKVRDVLTPEHEHEEEPEEAEDRPRAGAERGRSTQRPRSRPAARPRDEDDRPRSRPRRRTEEEDR</sequence>
<comment type="function">
    <text evidence="1 5">Gas vesicles are hollow, gas filled proteinaceous nanostructures found in some microorganisms. During planktonic growth they allow positioning of the organism at a favorable depth for light or nutrient acquisition. GvpA forms the protein shell (By similarity). It is not clear what function GVs perform in soil bacteria (Probable).</text>
</comment>
<comment type="subunit">
    <text evidence="1">The gas vesicle shell is 2 nm thick and consists of a single layer of this protein. It forms helical ribs nearly perpendicular to the long axis of the vesicle.</text>
</comment>
<comment type="subcellular location">
    <subcellularLocation>
        <location evidence="1">Gas vesicle shell</location>
    </subcellularLocation>
</comment>
<comment type="induction">
    <text evidence="3">Constitutively transcribed at low levels, repressed by argR.</text>
</comment>
<comment type="similarity">
    <text evidence="1">Belongs to the gas vesicle GvpA family.</text>
</comment>
<reference key="1">
    <citation type="journal article" date="2002" name="Nature">
        <title>Complete genome sequence of the model actinomycete Streptomyces coelicolor A3(2).</title>
        <authorList>
            <person name="Bentley S.D."/>
            <person name="Chater K.F."/>
            <person name="Cerdeno-Tarraga A.-M."/>
            <person name="Challis G.L."/>
            <person name="Thomson N.R."/>
            <person name="James K.D."/>
            <person name="Harris D.E."/>
            <person name="Quail M.A."/>
            <person name="Kieser H."/>
            <person name="Harper D."/>
            <person name="Bateman A."/>
            <person name="Brown S."/>
            <person name="Chandra G."/>
            <person name="Chen C.W."/>
            <person name="Collins M."/>
            <person name="Cronin A."/>
            <person name="Fraser A."/>
            <person name="Goble A."/>
            <person name="Hidalgo J."/>
            <person name="Hornsby T."/>
            <person name="Howarth S."/>
            <person name="Huang C.-H."/>
            <person name="Kieser T."/>
            <person name="Larke L."/>
            <person name="Murphy L.D."/>
            <person name="Oliver K."/>
            <person name="O'Neil S."/>
            <person name="Rabbinowitsch E."/>
            <person name="Rajandream M.A."/>
            <person name="Rutherford K.M."/>
            <person name="Rutter S."/>
            <person name="Seeger K."/>
            <person name="Saunders D."/>
            <person name="Sharp S."/>
            <person name="Squares R."/>
            <person name="Squares S."/>
            <person name="Taylor K."/>
            <person name="Warren T."/>
            <person name="Wietzorrek A."/>
            <person name="Woodward J.R."/>
            <person name="Barrell B.G."/>
            <person name="Parkhill J."/>
            <person name="Hopwood D.A."/>
        </authorList>
    </citation>
    <scope>NUCLEOTIDE SEQUENCE [LARGE SCALE GENOMIC DNA]</scope>
    <source>
        <strain>ATCC BAA-471 / A3(2) / M145</strain>
    </source>
</reference>
<reference key="2">
    <citation type="journal article" date="2018" name="Front. Microbiol.">
        <title>ArgR of Streptomyces coelicolor Is a Pleiotropic Transcriptional Regulator: Effect on the Transcriptome, Antibiotic Production, and Differentiation in Liquid Cultures.</title>
        <authorList>
            <person name="Botas A."/>
            <person name="Perez-Redondo R."/>
            <person name="Rodriguez-Garcia A."/>
            <person name="Alvarez-Alvarez R."/>
            <person name="Yaguee P."/>
            <person name="Manteca A."/>
            <person name="Liras P."/>
        </authorList>
    </citation>
    <scope>INDUCTION</scope>
    <source>
        <strain>ATCC BAA-471 / A3(2) / M145</strain>
    </source>
</reference>
<keyword id="KW-0304">Gas vesicle</keyword>
<keyword id="KW-1185">Reference proteome</keyword>
<organism>
    <name type="scientific">Streptomyces coelicolor (strain ATCC BAA-471 / A3(2) / M145)</name>
    <dbReference type="NCBI Taxonomy" id="100226"/>
    <lineage>
        <taxon>Bacteria</taxon>
        <taxon>Bacillati</taxon>
        <taxon>Actinomycetota</taxon>
        <taxon>Actinomycetes</taxon>
        <taxon>Kitasatosporales</taxon>
        <taxon>Streptomycetaceae</taxon>
        <taxon>Streptomyces</taxon>
        <taxon>Streptomyces albidoflavus group</taxon>
    </lineage>
</organism>
<evidence type="ECO:0000255" key="1">
    <source>
        <dbReference type="HAMAP-Rule" id="MF_00576"/>
    </source>
</evidence>
<evidence type="ECO:0000256" key="2">
    <source>
        <dbReference type="SAM" id="MobiDB-lite"/>
    </source>
</evidence>
<evidence type="ECO:0000269" key="3">
    <source>
    </source>
</evidence>
<evidence type="ECO:0000303" key="4">
    <source>
    </source>
</evidence>
<evidence type="ECO:0000305" key="5"/>
<dbReference type="EMBL" id="AL939106">
    <property type="protein sequence ID" value="CAB61167.1"/>
    <property type="molecule type" value="Genomic_DNA"/>
</dbReference>
<dbReference type="RefSeq" id="NP_624959.1">
    <property type="nucleotide sequence ID" value="NC_003888.3"/>
</dbReference>
<dbReference type="RefSeq" id="WP_011027272.1">
    <property type="nucleotide sequence ID" value="NZ_VNID01000004.1"/>
</dbReference>
<dbReference type="SMR" id="Q9RJB4"/>
<dbReference type="STRING" id="100226.gene:17758233"/>
<dbReference type="PaxDb" id="100226-SCO0650"/>
<dbReference type="KEGG" id="sco:SCO0650"/>
<dbReference type="PATRIC" id="fig|100226.15.peg.634"/>
<dbReference type="eggNOG" id="ENOG50328MZ">
    <property type="taxonomic scope" value="Bacteria"/>
</dbReference>
<dbReference type="HOGENOM" id="CLU_117660_1_0_11"/>
<dbReference type="InParanoid" id="Q9RJB4"/>
<dbReference type="OrthoDB" id="284387at2"/>
<dbReference type="Proteomes" id="UP000001973">
    <property type="component" value="Chromosome"/>
</dbReference>
<dbReference type="GO" id="GO:0033172">
    <property type="term" value="C:gas vesicle shell"/>
    <property type="evidence" value="ECO:0007669"/>
    <property type="project" value="UniProtKB-UniRule"/>
</dbReference>
<dbReference type="GO" id="GO:0012506">
    <property type="term" value="C:vesicle membrane"/>
    <property type="evidence" value="ECO:0007669"/>
    <property type="project" value="InterPro"/>
</dbReference>
<dbReference type="GO" id="GO:0005198">
    <property type="term" value="F:structural molecule activity"/>
    <property type="evidence" value="ECO:0007669"/>
    <property type="project" value="InterPro"/>
</dbReference>
<dbReference type="HAMAP" id="MF_00576">
    <property type="entry name" value="Gas_vesicle_A"/>
    <property type="match status" value="1"/>
</dbReference>
<dbReference type="InterPro" id="IPR000638">
    <property type="entry name" value="Gas-vesicle_GvpA-like"/>
</dbReference>
<dbReference type="InterPro" id="IPR047870">
    <property type="entry name" value="Gas_vesicle_GvpA"/>
</dbReference>
<dbReference type="InterPro" id="IPR050530">
    <property type="entry name" value="GvpA"/>
</dbReference>
<dbReference type="InterPro" id="IPR018493">
    <property type="entry name" value="GvpA-like_CS"/>
</dbReference>
<dbReference type="NCBIfam" id="NF006872">
    <property type="entry name" value="PRK09368.1"/>
    <property type="match status" value="1"/>
</dbReference>
<dbReference type="PANTHER" id="PTHR35344:SF4">
    <property type="entry name" value="GAS VESICLE PROTEIN A1"/>
    <property type="match status" value="1"/>
</dbReference>
<dbReference type="PANTHER" id="PTHR35344">
    <property type="entry name" value="GAS VESICLE STRUCTURAL PROTEIN 2-RELATED"/>
    <property type="match status" value="1"/>
</dbReference>
<dbReference type="Pfam" id="PF00741">
    <property type="entry name" value="Gas_vesicle"/>
    <property type="match status" value="1"/>
</dbReference>
<dbReference type="PROSITE" id="PS00234">
    <property type="entry name" value="GAS_VESICLE_A_1"/>
    <property type="match status" value="1"/>
</dbReference>
<dbReference type="PROSITE" id="PS00669">
    <property type="entry name" value="GAS_VESICLE_A_2"/>
    <property type="match status" value="1"/>
</dbReference>
<name>GVPA2_STRCO</name>
<feature type="chain" id="PRO_0000199991" description="Gas vesicle protein A2">
    <location>
        <begin position="1"/>
        <end position="170"/>
    </location>
</feature>
<feature type="region of interest" description="Disordered" evidence="2">
    <location>
        <begin position="86"/>
        <end position="170"/>
    </location>
</feature>
<feature type="compositionally biased region" description="Basic and acidic residues" evidence="2">
    <location>
        <begin position="104"/>
        <end position="119"/>
    </location>
</feature>
<feature type="compositionally biased region" description="Basic and acidic residues" evidence="2">
    <location>
        <begin position="127"/>
        <end position="137"/>
    </location>
</feature>
<feature type="compositionally biased region" description="Basic residues" evidence="2">
    <location>
        <begin position="138"/>
        <end position="148"/>
    </location>
</feature>
<feature type="compositionally biased region" description="Basic and acidic residues" evidence="2">
    <location>
        <begin position="149"/>
        <end position="170"/>
    </location>
</feature>
<accession>Q9RJB4</accession>
<gene>
    <name evidence="1 4" type="primary">gvpA2</name>
    <name type="ordered locus">SCO0650</name>
    <name type="ORF">SCF91.10</name>
</gene>
<protein>
    <recommendedName>
        <fullName evidence="1">Gas vesicle protein A2</fullName>
        <shortName evidence="1">GvpA2</shortName>
    </recommendedName>
</protein>
<proteinExistence type="evidence at transcript level"/>